<dbReference type="EMBL" id="U28373">
    <property type="protein sequence ID" value="AAB64815.1"/>
    <property type="molecule type" value="Genomic_DNA"/>
</dbReference>
<dbReference type="EMBL" id="BK006938">
    <property type="protein sequence ID" value="DAA12221.1"/>
    <property type="molecule type" value="Genomic_DNA"/>
</dbReference>
<dbReference type="PIR" id="S61174">
    <property type="entry name" value="S61174"/>
</dbReference>
<dbReference type="RefSeq" id="NP_010667.1">
    <property type="nucleotide sequence ID" value="NM_001180687.1"/>
</dbReference>
<dbReference type="SMR" id="Q06407"/>
<dbReference type="BioGRID" id="32438">
    <property type="interactions" value="79"/>
</dbReference>
<dbReference type="DIP" id="DIP-2995N"/>
<dbReference type="FunCoup" id="Q06407">
    <property type="interactions" value="190"/>
</dbReference>
<dbReference type="IntAct" id="Q06407">
    <property type="interactions" value="14"/>
</dbReference>
<dbReference type="MINT" id="Q06407"/>
<dbReference type="STRING" id="4932.YDR379W"/>
<dbReference type="GlyGen" id="Q06407">
    <property type="glycosylation" value="2 sites, 1 O-linked glycan (2 sites)"/>
</dbReference>
<dbReference type="iPTMnet" id="Q06407"/>
<dbReference type="PaxDb" id="4932-YDR379W"/>
<dbReference type="PeptideAtlas" id="Q06407"/>
<dbReference type="EnsemblFungi" id="YDR379W_mRNA">
    <property type="protein sequence ID" value="YDR379W"/>
    <property type="gene ID" value="YDR379W"/>
</dbReference>
<dbReference type="GeneID" id="851985"/>
<dbReference type="KEGG" id="sce:YDR379W"/>
<dbReference type="AGR" id="SGD:S000002787"/>
<dbReference type="SGD" id="S000002787">
    <property type="gene designation" value="RGA2"/>
</dbReference>
<dbReference type="VEuPathDB" id="FungiDB:YDR379W"/>
<dbReference type="eggNOG" id="KOG1453">
    <property type="taxonomic scope" value="Eukaryota"/>
</dbReference>
<dbReference type="eggNOG" id="KOG1704">
    <property type="taxonomic scope" value="Eukaryota"/>
</dbReference>
<dbReference type="GeneTree" id="ENSGT01030000234635"/>
<dbReference type="HOGENOM" id="CLU_003874_1_0_1"/>
<dbReference type="InParanoid" id="Q06407"/>
<dbReference type="OMA" id="GFERSPQ"/>
<dbReference type="OrthoDB" id="19923at2759"/>
<dbReference type="BioCyc" id="YEAST:G3O-29928-MONOMER"/>
<dbReference type="Reactome" id="R-SCE-9013148">
    <property type="pathway name" value="CDC42 GTPase cycle"/>
</dbReference>
<dbReference type="Reactome" id="R-SCE-9013405">
    <property type="pathway name" value="RHOD GTPase cycle"/>
</dbReference>
<dbReference type="Reactome" id="R-SCE-9013424">
    <property type="pathway name" value="RHOV GTPase cycle"/>
</dbReference>
<dbReference type="Reactome" id="R-SCE-9035034">
    <property type="pathway name" value="RHOF GTPase cycle"/>
</dbReference>
<dbReference type="BioGRID-ORCS" id="851985">
    <property type="hits" value="2 hits in 10 CRISPR screens"/>
</dbReference>
<dbReference type="PRO" id="PR:Q06407"/>
<dbReference type="Proteomes" id="UP000002311">
    <property type="component" value="Chromosome IV"/>
</dbReference>
<dbReference type="RNAct" id="Q06407">
    <property type="molecule type" value="protein"/>
</dbReference>
<dbReference type="GO" id="GO:0005938">
    <property type="term" value="C:cell cortex"/>
    <property type="evidence" value="ECO:0000318"/>
    <property type="project" value="GO_Central"/>
</dbReference>
<dbReference type="GO" id="GO:0032153">
    <property type="term" value="C:cell division site"/>
    <property type="evidence" value="ECO:0000318"/>
    <property type="project" value="GO_Central"/>
</dbReference>
<dbReference type="GO" id="GO:0051286">
    <property type="term" value="C:cell tip"/>
    <property type="evidence" value="ECO:0000318"/>
    <property type="project" value="GO_Central"/>
</dbReference>
<dbReference type="GO" id="GO:0005933">
    <property type="term" value="C:cellular bud"/>
    <property type="evidence" value="ECO:0000318"/>
    <property type="project" value="GO_Central"/>
</dbReference>
<dbReference type="GO" id="GO:0032177">
    <property type="term" value="C:cellular bud neck split septin rings"/>
    <property type="evidence" value="ECO:0000314"/>
    <property type="project" value="SGD"/>
</dbReference>
<dbReference type="GO" id="GO:0005886">
    <property type="term" value="C:plasma membrane"/>
    <property type="evidence" value="ECO:0000318"/>
    <property type="project" value="GO_Central"/>
</dbReference>
<dbReference type="GO" id="GO:0030427">
    <property type="term" value="C:site of polarized growth"/>
    <property type="evidence" value="ECO:0000318"/>
    <property type="project" value="GO_Central"/>
</dbReference>
<dbReference type="GO" id="GO:0005096">
    <property type="term" value="F:GTPase activator activity"/>
    <property type="evidence" value="ECO:0000314"/>
    <property type="project" value="SGD"/>
</dbReference>
<dbReference type="GO" id="GO:0042802">
    <property type="term" value="F:identical protein binding"/>
    <property type="evidence" value="ECO:0000353"/>
    <property type="project" value="IntAct"/>
</dbReference>
<dbReference type="GO" id="GO:0046872">
    <property type="term" value="F:metal ion binding"/>
    <property type="evidence" value="ECO:0007669"/>
    <property type="project" value="UniProtKB-KW"/>
</dbReference>
<dbReference type="GO" id="GO:0030010">
    <property type="term" value="P:establishment of cell polarity"/>
    <property type="evidence" value="ECO:0000318"/>
    <property type="project" value="GO_Central"/>
</dbReference>
<dbReference type="GO" id="GO:0031106">
    <property type="term" value="P:septin ring organization"/>
    <property type="evidence" value="ECO:0000316"/>
    <property type="project" value="SGD"/>
</dbReference>
<dbReference type="GO" id="GO:0007264">
    <property type="term" value="P:small GTPase-mediated signal transduction"/>
    <property type="evidence" value="ECO:0000315"/>
    <property type="project" value="SGD"/>
</dbReference>
<dbReference type="CDD" id="cd09394">
    <property type="entry name" value="LIM1_Rga"/>
    <property type="match status" value="1"/>
</dbReference>
<dbReference type="CDD" id="cd09395">
    <property type="entry name" value="LIM2_Rga"/>
    <property type="match status" value="1"/>
</dbReference>
<dbReference type="CDD" id="cd00159">
    <property type="entry name" value="RhoGAP"/>
    <property type="match status" value="1"/>
</dbReference>
<dbReference type="FunFam" id="1.10.555.10:FF:000057">
    <property type="entry name" value="Rho GTPase-activating protein"/>
    <property type="match status" value="1"/>
</dbReference>
<dbReference type="Gene3D" id="2.10.110.10">
    <property type="entry name" value="Cysteine Rich Protein"/>
    <property type="match status" value="2"/>
</dbReference>
<dbReference type="Gene3D" id="1.10.555.10">
    <property type="entry name" value="Rho GTPase activation protein"/>
    <property type="match status" value="1"/>
</dbReference>
<dbReference type="InterPro" id="IPR050729">
    <property type="entry name" value="Rho-GAP"/>
</dbReference>
<dbReference type="InterPro" id="IPR008936">
    <property type="entry name" value="Rho_GTPase_activation_prot"/>
</dbReference>
<dbReference type="InterPro" id="IPR000198">
    <property type="entry name" value="RhoGAP_dom"/>
</dbReference>
<dbReference type="InterPro" id="IPR001781">
    <property type="entry name" value="Znf_LIM"/>
</dbReference>
<dbReference type="PANTHER" id="PTHR23176:SF121">
    <property type="entry name" value="RHO-TYPE GTPASE-ACTIVATING PROTEIN 1-RELATED"/>
    <property type="match status" value="1"/>
</dbReference>
<dbReference type="PANTHER" id="PTHR23176">
    <property type="entry name" value="RHO/RAC/CDC GTPASE-ACTIVATING PROTEIN"/>
    <property type="match status" value="1"/>
</dbReference>
<dbReference type="Pfam" id="PF00412">
    <property type="entry name" value="LIM"/>
    <property type="match status" value="2"/>
</dbReference>
<dbReference type="Pfam" id="PF00620">
    <property type="entry name" value="RhoGAP"/>
    <property type="match status" value="1"/>
</dbReference>
<dbReference type="SMART" id="SM00132">
    <property type="entry name" value="LIM"/>
    <property type="match status" value="2"/>
</dbReference>
<dbReference type="SMART" id="SM00324">
    <property type="entry name" value="RhoGAP"/>
    <property type="match status" value="1"/>
</dbReference>
<dbReference type="SUPFAM" id="SSF48350">
    <property type="entry name" value="GTPase activation domain, GAP"/>
    <property type="match status" value="1"/>
</dbReference>
<dbReference type="PROSITE" id="PS00478">
    <property type="entry name" value="LIM_DOMAIN_1"/>
    <property type="match status" value="1"/>
</dbReference>
<dbReference type="PROSITE" id="PS50023">
    <property type="entry name" value="LIM_DOMAIN_2"/>
    <property type="match status" value="1"/>
</dbReference>
<dbReference type="PROSITE" id="PS50238">
    <property type="entry name" value="RHOGAP"/>
    <property type="match status" value="1"/>
</dbReference>
<gene>
    <name type="primary">RGA2</name>
    <name type="ordered locus">YDR379W</name>
    <name type="ORF">D9481.4</name>
</gene>
<keyword id="KW-0343">GTPase activation</keyword>
<keyword id="KW-0440">LIM domain</keyword>
<keyword id="KW-0479">Metal-binding</keyword>
<keyword id="KW-0597">Phosphoprotein</keyword>
<keyword id="KW-1185">Reference proteome</keyword>
<keyword id="KW-0677">Repeat</keyword>
<keyword id="KW-0862">Zinc</keyword>
<organism>
    <name type="scientific">Saccharomyces cerevisiae (strain ATCC 204508 / S288c)</name>
    <name type="common">Baker's yeast</name>
    <dbReference type="NCBI Taxonomy" id="559292"/>
    <lineage>
        <taxon>Eukaryota</taxon>
        <taxon>Fungi</taxon>
        <taxon>Dikarya</taxon>
        <taxon>Ascomycota</taxon>
        <taxon>Saccharomycotina</taxon>
        <taxon>Saccharomycetes</taxon>
        <taxon>Saccharomycetales</taxon>
        <taxon>Saccharomycetaceae</taxon>
        <taxon>Saccharomyces</taxon>
    </lineage>
</organism>
<feature type="chain" id="PRO_0000075900" description="Rho-type GTPase-activating protein 2">
    <location>
        <begin position="1"/>
        <end position="1009"/>
    </location>
</feature>
<feature type="domain" description="LIM zinc-binding 1" evidence="1">
    <location>
        <begin position="11"/>
        <end position="68"/>
    </location>
</feature>
<feature type="domain" description="LIM zinc-binding 2" evidence="1">
    <location>
        <begin position="69"/>
        <end position="129"/>
    </location>
</feature>
<feature type="domain" description="Rho-GAP" evidence="2">
    <location>
        <begin position="788"/>
        <end position="1006"/>
    </location>
</feature>
<feature type="region of interest" description="Disordered" evidence="3">
    <location>
        <begin position="143"/>
        <end position="228"/>
    </location>
</feature>
<feature type="region of interest" description="Disordered" evidence="3">
    <location>
        <begin position="358"/>
        <end position="433"/>
    </location>
</feature>
<feature type="region of interest" description="Disordered" evidence="3">
    <location>
        <begin position="449"/>
        <end position="608"/>
    </location>
</feature>
<feature type="region of interest" description="Disordered" evidence="3">
    <location>
        <begin position="664"/>
        <end position="709"/>
    </location>
</feature>
<feature type="region of interest" description="Disordered" evidence="3">
    <location>
        <begin position="723"/>
        <end position="780"/>
    </location>
</feature>
<feature type="compositionally biased region" description="Basic and acidic residues" evidence="3">
    <location>
        <begin position="143"/>
        <end position="155"/>
    </location>
</feature>
<feature type="compositionally biased region" description="Polar residues" evidence="3">
    <location>
        <begin position="162"/>
        <end position="196"/>
    </location>
</feature>
<feature type="compositionally biased region" description="Basic and acidic residues" evidence="3">
    <location>
        <begin position="212"/>
        <end position="222"/>
    </location>
</feature>
<feature type="compositionally biased region" description="Polar residues" evidence="3">
    <location>
        <begin position="363"/>
        <end position="385"/>
    </location>
</feature>
<feature type="compositionally biased region" description="Polar residues" evidence="3">
    <location>
        <begin position="399"/>
        <end position="414"/>
    </location>
</feature>
<feature type="compositionally biased region" description="Basic residues" evidence="3">
    <location>
        <begin position="481"/>
        <end position="491"/>
    </location>
</feature>
<feature type="compositionally biased region" description="Polar residues" evidence="3">
    <location>
        <begin position="493"/>
        <end position="510"/>
    </location>
</feature>
<feature type="compositionally biased region" description="Polar residues" evidence="3">
    <location>
        <begin position="522"/>
        <end position="553"/>
    </location>
</feature>
<feature type="compositionally biased region" description="Basic and acidic residues" evidence="3">
    <location>
        <begin position="664"/>
        <end position="682"/>
    </location>
</feature>
<feature type="compositionally biased region" description="Polar residues" evidence="3">
    <location>
        <begin position="683"/>
        <end position="707"/>
    </location>
</feature>
<feature type="compositionally biased region" description="Polar residues" evidence="3">
    <location>
        <begin position="728"/>
        <end position="749"/>
    </location>
</feature>
<feature type="site" description="Arginine finger; crucial for GTP hydrolysis by stabilizing the transition state" evidence="2">
    <location>
        <position position="826"/>
    </location>
</feature>
<feature type="modified residue" description="Phosphoserine" evidence="5 6">
    <location>
        <position position="763"/>
    </location>
</feature>
<reference key="1">
    <citation type="journal article" date="1997" name="Nature">
        <title>The nucleotide sequence of Saccharomyces cerevisiae chromosome IV.</title>
        <authorList>
            <person name="Jacq C."/>
            <person name="Alt-Moerbe J."/>
            <person name="Andre B."/>
            <person name="Arnold W."/>
            <person name="Bahr A."/>
            <person name="Ballesta J.P.G."/>
            <person name="Bargues M."/>
            <person name="Baron L."/>
            <person name="Becker A."/>
            <person name="Biteau N."/>
            <person name="Bloecker H."/>
            <person name="Blugeon C."/>
            <person name="Boskovic J."/>
            <person name="Brandt P."/>
            <person name="Brueckner M."/>
            <person name="Buitrago M.J."/>
            <person name="Coster F."/>
            <person name="Delaveau T."/>
            <person name="del Rey F."/>
            <person name="Dujon B."/>
            <person name="Eide L.G."/>
            <person name="Garcia-Cantalejo J.M."/>
            <person name="Goffeau A."/>
            <person name="Gomez-Peris A."/>
            <person name="Granotier C."/>
            <person name="Hanemann V."/>
            <person name="Hankeln T."/>
            <person name="Hoheisel J.D."/>
            <person name="Jaeger W."/>
            <person name="Jimenez A."/>
            <person name="Jonniaux J.-L."/>
            <person name="Kraemer C."/>
            <person name="Kuester H."/>
            <person name="Laamanen P."/>
            <person name="Legros Y."/>
            <person name="Louis E.J."/>
            <person name="Moeller-Rieker S."/>
            <person name="Monnet A."/>
            <person name="Moro M."/>
            <person name="Mueller-Auer S."/>
            <person name="Nussbaumer B."/>
            <person name="Paricio N."/>
            <person name="Paulin L."/>
            <person name="Perea J."/>
            <person name="Perez-Alonso M."/>
            <person name="Perez-Ortin J.E."/>
            <person name="Pohl T.M."/>
            <person name="Prydz H."/>
            <person name="Purnelle B."/>
            <person name="Rasmussen S.W."/>
            <person name="Remacha M.A."/>
            <person name="Revuelta J.L."/>
            <person name="Rieger M."/>
            <person name="Salom D."/>
            <person name="Saluz H.P."/>
            <person name="Saiz J.E."/>
            <person name="Saren A.-M."/>
            <person name="Schaefer M."/>
            <person name="Scharfe M."/>
            <person name="Schmidt E.R."/>
            <person name="Schneider C."/>
            <person name="Scholler P."/>
            <person name="Schwarz S."/>
            <person name="Soler-Mira A."/>
            <person name="Urrestarazu L.A."/>
            <person name="Verhasselt P."/>
            <person name="Vissers S."/>
            <person name="Voet M."/>
            <person name="Volckaert G."/>
            <person name="Wagner G."/>
            <person name="Wambutt R."/>
            <person name="Wedler E."/>
            <person name="Wedler H."/>
            <person name="Woelfl S."/>
            <person name="Harris D.E."/>
            <person name="Bowman S."/>
            <person name="Brown D."/>
            <person name="Churcher C.M."/>
            <person name="Connor R."/>
            <person name="Dedman K."/>
            <person name="Gentles S."/>
            <person name="Hamlin N."/>
            <person name="Hunt S."/>
            <person name="Jones L."/>
            <person name="McDonald S."/>
            <person name="Murphy L.D."/>
            <person name="Niblett D."/>
            <person name="Odell C."/>
            <person name="Oliver K."/>
            <person name="Rajandream M.A."/>
            <person name="Richards C."/>
            <person name="Shore L."/>
            <person name="Walsh S.V."/>
            <person name="Barrell B.G."/>
            <person name="Dietrich F.S."/>
            <person name="Mulligan J.T."/>
            <person name="Allen E."/>
            <person name="Araujo R."/>
            <person name="Aviles E."/>
            <person name="Berno A."/>
            <person name="Carpenter J."/>
            <person name="Chen E."/>
            <person name="Cherry J.M."/>
            <person name="Chung E."/>
            <person name="Duncan M."/>
            <person name="Hunicke-Smith S."/>
            <person name="Hyman R.W."/>
            <person name="Komp C."/>
            <person name="Lashkari D."/>
            <person name="Lew H."/>
            <person name="Lin D."/>
            <person name="Mosedale D."/>
            <person name="Nakahara K."/>
            <person name="Namath A."/>
            <person name="Oefner P."/>
            <person name="Oh C."/>
            <person name="Petel F.X."/>
            <person name="Roberts D."/>
            <person name="Schramm S."/>
            <person name="Schroeder M."/>
            <person name="Shogren T."/>
            <person name="Shroff N."/>
            <person name="Winant A."/>
            <person name="Yelton M.A."/>
            <person name="Botstein D."/>
            <person name="Davis R.W."/>
            <person name="Johnston M."/>
            <person name="Andrews S."/>
            <person name="Brinkman R."/>
            <person name="Cooper J."/>
            <person name="Ding H."/>
            <person name="Du Z."/>
            <person name="Favello A."/>
            <person name="Fulton L."/>
            <person name="Gattung S."/>
            <person name="Greco T."/>
            <person name="Hallsworth K."/>
            <person name="Hawkins J."/>
            <person name="Hillier L.W."/>
            <person name="Jier M."/>
            <person name="Johnson D."/>
            <person name="Johnston L."/>
            <person name="Kirsten J."/>
            <person name="Kucaba T."/>
            <person name="Langston Y."/>
            <person name="Latreille P."/>
            <person name="Le T."/>
            <person name="Mardis E."/>
            <person name="Menezes S."/>
            <person name="Miller N."/>
            <person name="Nhan M."/>
            <person name="Pauley A."/>
            <person name="Peluso D."/>
            <person name="Rifkin L."/>
            <person name="Riles L."/>
            <person name="Taich A."/>
            <person name="Trevaskis E."/>
            <person name="Vignati D."/>
            <person name="Wilcox L."/>
            <person name="Wohldman P."/>
            <person name="Vaudin M."/>
            <person name="Wilson R."/>
            <person name="Waterston R."/>
            <person name="Albermann K."/>
            <person name="Hani J."/>
            <person name="Heumann K."/>
            <person name="Kleine K."/>
            <person name="Mewes H.-W."/>
            <person name="Zollner A."/>
            <person name="Zaccaria P."/>
        </authorList>
    </citation>
    <scope>NUCLEOTIDE SEQUENCE [LARGE SCALE GENOMIC DNA]</scope>
    <source>
        <strain>ATCC 204508 / S288c</strain>
    </source>
</reference>
<reference key="2">
    <citation type="journal article" date="2014" name="G3 (Bethesda)">
        <title>The reference genome sequence of Saccharomyces cerevisiae: Then and now.</title>
        <authorList>
            <person name="Engel S.R."/>
            <person name="Dietrich F.S."/>
            <person name="Fisk D.G."/>
            <person name="Binkley G."/>
            <person name="Balakrishnan R."/>
            <person name="Costanzo M.C."/>
            <person name="Dwight S.S."/>
            <person name="Hitz B.C."/>
            <person name="Karra K."/>
            <person name="Nash R.S."/>
            <person name="Weng S."/>
            <person name="Wong E.D."/>
            <person name="Lloyd P."/>
            <person name="Skrzypek M.S."/>
            <person name="Miyasato S.R."/>
            <person name="Simison M."/>
            <person name="Cherry J.M."/>
        </authorList>
    </citation>
    <scope>GENOME REANNOTATION</scope>
    <source>
        <strain>ATCC 204508 / S288c</strain>
    </source>
</reference>
<reference key="3">
    <citation type="journal article" date="2003" name="Nature">
        <title>Global analysis of protein expression in yeast.</title>
        <authorList>
            <person name="Ghaemmaghami S."/>
            <person name="Huh W.-K."/>
            <person name="Bower K."/>
            <person name="Howson R.W."/>
            <person name="Belle A."/>
            <person name="Dephoure N."/>
            <person name="O'Shea E.K."/>
            <person name="Weissman J.S."/>
        </authorList>
    </citation>
    <scope>LEVEL OF PROTEIN EXPRESSION [LARGE SCALE ANALYSIS]</scope>
</reference>
<reference key="4">
    <citation type="journal article" date="2007" name="J. Proteome Res.">
        <title>Large-scale phosphorylation analysis of alpha-factor-arrested Saccharomyces cerevisiae.</title>
        <authorList>
            <person name="Li X."/>
            <person name="Gerber S.A."/>
            <person name="Rudner A.D."/>
            <person name="Beausoleil S.A."/>
            <person name="Haas W."/>
            <person name="Villen J."/>
            <person name="Elias J.E."/>
            <person name="Gygi S.P."/>
        </authorList>
    </citation>
    <scope>PHOSPHORYLATION [LARGE SCALE ANALYSIS] AT SER-763</scope>
    <scope>IDENTIFICATION BY MASS SPECTROMETRY [LARGE SCALE ANALYSIS]</scope>
    <source>
        <strain>ADR376</strain>
    </source>
</reference>
<reference key="5">
    <citation type="journal article" date="2008" name="Mol. Cell. Proteomics">
        <title>A multidimensional chromatography technology for in-depth phosphoproteome analysis.</title>
        <authorList>
            <person name="Albuquerque C.P."/>
            <person name="Smolka M.B."/>
            <person name="Payne S.H."/>
            <person name="Bafna V."/>
            <person name="Eng J."/>
            <person name="Zhou H."/>
        </authorList>
    </citation>
    <scope>IDENTIFICATION BY MASS SPECTROMETRY [LARGE SCALE ANALYSIS]</scope>
</reference>
<reference key="6">
    <citation type="journal article" date="2009" name="Science">
        <title>Global analysis of Cdk1 substrate phosphorylation sites provides insights into evolution.</title>
        <authorList>
            <person name="Holt L.J."/>
            <person name="Tuch B.B."/>
            <person name="Villen J."/>
            <person name="Johnson A.D."/>
            <person name="Gygi S.P."/>
            <person name="Morgan D.O."/>
        </authorList>
    </citation>
    <scope>PHOSPHORYLATION [LARGE SCALE ANALYSIS] AT SER-763</scope>
    <scope>IDENTIFICATION BY MASS SPECTROMETRY [LARGE SCALE ANALYSIS]</scope>
</reference>
<accession>Q06407</accession>
<accession>D6VT11</accession>
<sequence>MSADPINDQSSLCVRCNKSIASSQVYELESKKWHDQCFTCYKCDKKLNADSDFLVLDIGTLICYDCSDKCTNCGDKIDDTAIILPSSNEAYCSNCFRCCRCSNRIKNLKYAKTKRGLCCMDCHEKLLRKKQLLLENQTKNSSKEDFPIKLPERSVKRPLSPTRINGKSDVSTNNTAISKNLVSSNEDQQLTPQVLVSQERDESSLNDNNDNDNSKDREETSSHARTVSIDDILNSTLEHDSNSIEEQSLVDNEDYINKMGEDVTYRLLKPQRANRDSIVVKDPRIPNSNSNANRFFSIYDKEETDKDDTDNKENEIIVNTPRNSTDKITSPLNSPMAVQMNEEVEPPHGLALTLSEATKENNKSSQGIQTSTSKSMNHVSPITRTDTVEMKTSTSSSTLRLSDNGSFSRPQTADNLLPHKKVAPSPNKKLSRSFSLKSKNFVHNLKSKTSEMLDPKHPHHSTSIQESDTHSGWGVSSTHTNIRKSKAKKNPVSRGQSDSTIYNTLPQHGNFTVPEFNHKKAQSSLGSISKKQNSNDTATNRRINGSFTSSSSGHHIAMFRTPPLESGPLFKRPSLSSESAHHRSSSLQTSRSTNALLEDDSTKVDATDESATSLEKDFYFTELTLRKLKLDVRELEGTKKKLLQDVENLRLAKERLLNDVDNLTREKDKQSASSRESLEQKENIATSITVKSPSSNSDRKGSISNASPKPRFWKIFSSAKDHQVGDLESQQRSPNSSSGGTTNIAQKEISSPKLIRVHDELPSPGKVPLSPSPKRLDYTPDGSHLYGSSLQARCAYEKSTVPIIIRCCIDRIEKDDIGLNMEGLYRKSGSQTLVEEIENEFAQNNSLHSDTLSPKLNALLNQDIHAVASVLKRYLRKLPDPVLSFSIYDALIDLVRNNQLIERLPLNNDKFLDSPQKVTIYEMVLKSLLEIFKILPVEHQEVLKVLAAHIGKVRRCSERNLMNLHNLSLVFAPSLIHDFDGEKDIVDMKERNYIVEFILGNYRDIFKQA</sequence>
<comment type="function">
    <text>GTPase-activating protein (GAP) for CDC42 and/or RHO1.</text>
</comment>
<comment type="interaction">
    <interactant intactId="EBI-15060">
        <id>Q06407</id>
    </interactant>
    <interactant intactId="EBI-31494">
        <id>Q12518</id>
        <label>ENT1</label>
    </interactant>
    <organismsDiffer>false</organismsDiffer>
    <experiments>6</experiments>
</comment>
<comment type="interaction">
    <interactant intactId="EBI-15060">
        <id>Q06407</id>
    </interactant>
    <interactant intactId="EBI-35928">
        <id>Q05785</id>
        <label>ENT2</label>
    </interactant>
    <organismsDiffer>false</organismsDiffer>
    <experiments>2</experiments>
</comment>
<comment type="interaction">
    <interactant intactId="EBI-15060">
        <id>Q06407</id>
    </interactant>
    <interactant intactId="EBI-15060">
        <id>Q06407</id>
        <label>RGA2</label>
    </interactant>
    <organismsDiffer>false</organismsDiffer>
    <experiments>3</experiments>
</comment>
<comment type="interaction">
    <interactant intactId="EBI-15060">
        <id>Q06407</id>
    </interactant>
    <interactant intactId="EBI-7066728">
        <id>O88339</id>
        <label>Epn1</label>
    </interactant>
    <organismsDiffer>true</organismsDiffer>
    <experiments>2</experiments>
</comment>
<comment type="miscellaneous">
    <text evidence="4">Present with 254 molecules/cell in log phase SD medium.</text>
</comment>
<protein>
    <recommendedName>
        <fullName>Rho-type GTPase-activating protein 2</fullName>
    </recommendedName>
</protein>
<evidence type="ECO:0000255" key="1">
    <source>
        <dbReference type="PROSITE-ProRule" id="PRU00125"/>
    </source>
</evidence>
<evidence type="ECO:0000255" key="2">
    <source>
        <dbReference type="PROSITE-ProRule" id="PRU00172"/>
    </source>
</evidence>
<evidence type="ECO:0000256" key="3">
    <source>
        <dbReference type="SAM" id="MobiDB-lite"/>
    </source>
</evidence>
<evidence type="ECO:0000269" key="4">
    <source>
    </source>
</evidence>
<evidence type="ECO:0007744" key="5">
    <source>
    </source>
</evidence>
<evidence type="ECO:0007744" key="6">
    <source>
    </source>
</evidence>
<name>RGA2_YEAST</name>
<proteinExistence type="evidence at protein level"/>